<proteinExistence type="predicted"/>
<comment type="function">
    <text evidence="2 5">Part of the gene cluster that mediates the biosynthesis of the dimeric xanthones cryptosporioptides (PubMed:30996871). The pathway begins with the synthesis of atrochrysone thioester by the polyketide synthase dmx-nrPKS (Probable). The atrochrysone carboxyl ACP thioesterase dmxR1 then breaks the thioester bond and releases the atrochrysone carboxylic acid from dmx-nrPKS (Probable). Atrochrysone carboxylic acid is decarboxylated by the decarboxylase dmxR15, and oxidized by the anthrone oxygenase dmxR16 to yield emodin (Probable). Emodin is then reduced to emodin hydroquinone by the oxidoreductase dmxR7 (Probable). A-ring reduction by the short chain dehydrogenase dmxR18, dehydration by the scytalone dehydratase-like protein dmxR17 and probable spontaneous re-oxidation, results in overall deoxygenation to chrysophanol (PubMed:30996871). Baeyer-Villiger oxidation by the Baeyer-Villiger monooxygenase (BVMO) dmxR6 then yields monodictylactone in equilibrium with monodictyphenone (PubMed:30996871). In the case of the cryptosporioptides biosynthesis, monodictylactone is reduced at C-12 to an alcohol (by the short chain dehydrogenases dmxR12 or dmxR8) and hydroxylated at C-5 by dmxR9, yielding the electron-rich aromatic which could eliminate H(2)O to form the ortho-quinonemethide, followed by tautomerisation to paraquinone and complete the formal reduction to produce the 10-methylgroup (Probable). Conjugate addition of C-4a-OH to the resulting paraquinone by the monooxygenase dmxR10 then gives cyclohexadienone, which is then reduced at C-5 by the short chain dehydrogenase dmxR3 to give the dihydroxanthone (Probable). The 6,7-epoxide in the cryptosporioptides could be introduced by the cytochrome P450 monooxygenase dmxL3 (Probable). The highly reducing PKS dmxL2 manufactures butyrate, which is further carboxylated by dmxL1 to form ethylmalonate (PubMed:30996871). It is not yet clear whether the carboxylation occurs while the butyrate is attached to the ACP of dmxL2, but this unusual fungal metabolite could then be esterified to O-5 by the O-acetyltransferase dmxR13 (PubMed:30996871). Finally, dimerization performed by dmxR5 gives the observed dimers cryptosporioptides A, B and C as the final products of the pathway (PubMed:30996871).</text>
</comment>
<comment type="pathway">
    <text evidence="5">Secondary metabolite biosynthesis.</text>
</comment>
<comment type="domain">
    <text evidence="4">The hemerythrin-like domain might act as a cathion-binding domain since it binds iron in haemerythrin, but can bind other metals in related proteins, such as cadmium or magnesium.</text>
</comment>
<dbReference type="EMBL" id="MK182094">
    <property type="protein sequence ID" value="QCL09102.1"/>
    <property type="molecule type" value="Genomic_DNA"/>
</dbReference>
<dbReference type="SMR" id="A0A4P8DJU7"/>
<dbReference type="GO" id="GO:0046872">
    <property type="term" value="F:metal ion binding"/>
    <property type="evidence" value="ECO:0007669"/>
    <property type="project" value="UniProtKB-KW"/>
</dbReference>
<dbReference type="CDD" id="cd12108">
    <property type="entry name" value="Hr-like"/>
    <property type="match status" value="1"/>
</dbReference>
<dbReference type="Gene3D" id="1.20.120.520">
    <property type="entry name" value="nmb1532 protein domain like"/>
    <property type="match status" value="1"/>
</dbReference>
<dbReference type="InterPro" id="IPR053206">
    <property type="entry name" value="Dimeric_xanthone_biosynth"/>
</dbReference>
<dbReference type="InterPro" id="IPR012312">
    <property type="entry name" value="Hemerythrin-like"/>
</dbReference>
<dbReference type="PANTHER" id="PTHR38048">
    <property type="entry name" value="EXPRESSED PROTEIN"/>
    <property type="match status" value="1"/>
</dbReference>
<dbReference type="PANTHER" id="PTHR38048:SF2">
    <property type="entry name" value="HEMERYTHRIN-LIKE DOMAIN-CONTAINING PROTEIN"/>
    <property type="match status" value="1"/>
</dbReference>
<dbReference type="Pfam" id="PF01814">
    <property type="entry name" value="Hemerythrin"/>
    <property type="match status" value="1"/>
</dbReference>
<feature type="chain" id="PRO_0000453513" description="Dimeric xanthone biosynthesis cluster protein R11">
    <location>
        <begin position="1"/>
        <end position="262"/>
    </location>
</feature>
<feature type="region of interest" description="Hemerythrin-like" evidence="1">
    <location>
        <begin position="69"/>
        <end position="160"/>
    </location>
</feature>
<sequence>MSTTSVIPKHWVDKGPWPIMTTPQGEGQDTNSHYSVFLATDMCHVHNLFIRAMNSVYLQCPYVTDQADIADLLFYTKTLVITIDAHHDSEEKYLFPELAAYTKNPKIMAVNQAQHAAFHGGLEKLGEYCTTTSPADYSSVTFRAMIDSFAPQLFKHLNDEIPTILALKQYPSEDLKTIWTKTEQHIDDVGSFDEMFPLAFGCMDKGFEAGQHKFPPAPFFMEYVVRYWFARKHSGAWRFNPCDMRGNPRQLLFIPTEEDQKP</sequence>
<name>DMR11_CRYX8</name>
<gene>
    <name evidence="3" type="primary">dmxR11</name>
</gene>
<keyword id="KW-0479">Metal-binding</keyword>
<evidence type="ECO:0000255" key="1"/>
<evidence type="ECO:0000269" key="2">
    <source>
    </source>
</evidence>
<evidence type="ECO:0000303" key="3">
    <source>
    </source>
</evidence>
<evidence type="ECO:0000305" key="4"/>
<evidence type="ECO:0000305" key="5">
    <source>
    </source>
</evidence>
<organism>
    <name type="scientific">Cryptosporiopsis sp. (strain 8999)</name>
    <dbReference type="NCBI Taxonomy" id="2572248"/>
    <lineage>
        <taxon>Eukaryota</taxon>
        <taxon>Fungi</taxon>
        <taxon>Dikarya</taxon>
        <taxon>Ascomycota</taxon>
        <taxon>Pezizomycotina</taxon>
        <taxon>Leotiomycetes</taxon>
        <taxon>Helotiales</taxon>
        <taxon>Dermateaceae</taxon>
        <taxon>Cryptosporiopsis</taxon>
    </lineage>
</organism>
<protein>
    <recommendedName>
        <fullName evidence="3">Dimeric xanthone biosynthesis cluster protein R11</fullName>
    </recommendedName>
</protein>
<reference key="1">
    <citation type="journal article" date="2019" name="Chem. Sci.">
        <title>Structure revision of cryptosporioptides and determination of the genetic basis for dimeric xanthone biosynthesis in fungi.</title>
        <authorList>
            <person name="Greco C."/>
            <person name="de Mattos-Shipley K."/>
            <person name="Bailey A.M."/>
            <person name="Mulholland N.P."/>
            <person name="Vincent J.L."/>
            <person name="Willis C.L."/>
            <person name="Cox R.J."/>
            <person name="Simpson T.J."/>
        </authorList>
    </citation>
    <scope>NUCLEOTIDE SEQUENCE [GENOMIC DNA]</scope>
    <scope>FUNCTION</scope>
    <scope>PATHWAY</scope>
    <source>
        <strain>8999</strain>
    </source>
</reference>
<accession>A0A4P8DJU7</accession>